<proteinExistence type="inferred from homology"/>
<dbReference type="EMBL" id="AF041468">
    <property type="protein sequence ID" value="AAC35684.1"/>
    <property type="molecule type" value="Genomic_DNA"/>
</dbReference>
<dbReference type="SMR" id="O78493"/>
<dbReference type="HOGENOM" id="CLU_031942_3_0_1"/>
<dbReference type="OMA" id="AWAFIAP"/>
<dbReference type="GO" id="GO:0031969">
    <property type="term" value="C:chloroplast membrane"/>
    <property type="evidence" value="ECO:0007669"/>
    <property type="project" value="UniProtKB-SubCell"/>
</dbReference>
<dbReference type="GO" id="GO:0033281">
    <property type="term" value="C:TAT protein transport complex"/>
    <property type="evidence" value="ECO:0007669"/>
    <property type="project" value="TreeGrafter"/>
</dbReference>
<dbReference type="GO" id="GO:0009977">
    <property type="term" value="F:proton motive force dependent protein transmembrane transporter activity"/>
    <property type="evidence" value="ECO:0007669"/>
    <property type="project" value="TreeGrafter"/>
</dbReference>
<dbReference type="GO" id="GO:0065002">
    <property type="term" value="P:intracellular protein transmembrane transport"/>
    <property type="evidence" value="ECO:0007669"/>
    <property type="project" value="TreeGrafter"/>
</dbReference>
<dbReference type="GO" id="GO:0043953">
    <property type="term" value="P:protein transport by the Tat complex"/>
    <property type="evidence" value="ECO:0007669"/>
    <property type="project" value="TreeGrafter"/>
</dbReference>
<dbReference type="HAMAP" id="MF_00902">
    <property type="entry name" value="TatC"/>
    <property type="match status" value="1"/>
</dbReference>
<dbReference type="InterPro" id="IPR019820">
    <property type="entry name" value="Sec-indep_translocase_CS"/>
</dbReference>
<dbReference type="InterPro" id="IPR002033">
    <property type="entry name" value="TatC"/>
</dbReference>
<dbReference type="NCBIfam" id="TIGR00945">
    <property type="entry name" value="tatC"/>
    <property type="match status" value="1"/>
</dbReference>
<dbReference type="PANTHER" id="PTHR30371">
    <property type="entry name" value="SEC-INDEPENDENT PROTEIN TRANSLOCASE PROTEIN TATC"/>
    <property type="match status" value="1"/>
</dbReference>
<dbReference type="PANTHER" id="PTHR30371:SF0">
    <property type="entry name" value="SEC-INDEPENDENT PROTEIN TRANSLOCASE PROTEIN TATC, CHLOROPLASTIC-RELATED"/>
    <property type="match status" value="1"/>
</dbReference>
<dbReference type="Pfam" id="PF00902">
    <property type="entry name" value="TatC"/>
    <property type="match status" value="1"/>
</dbReference>
<dbReference type="PRINTS" id="PR01840">
    <property type="entry name" value="TATCFAMILY"/>
</dbReference>
<dbReference type="PROSITE" id="PS01218">
    <property type="entry name" value="TATC"/>
    <property type="match status" value="1"/>
</dbReference>
<reference key="1">
    <citation type="journal article" date="1999" name="J. Mol. Evol.">
        <title>The plastid genome of the cryptophyte alga, Guillardia theta: complete sequence and conserved synteny groups confirm its common ancestry with red algae.</title>
        <authorList>
            <person name="Douglas S.E."/>
            <person name="Penny S.L."/>
        </authorList>
    </citation>
    <scope>NUCLEOTIDE SEQUENCE [LARGE SCALE GENOMIC DNA]</scope>
</reference>
<geneLocation type="chloroplast"/>
<name>YCF43_GUITH</name>
<feature type="chain" id="PRO_0000098101" description="Uncharacterized tatC-like protein ycf43">
    <location>
        <begin position="1"/>
        <end position="290"/>
    </location>
</feature>
<feature type="transmembrane region" description="Helical" evidence="1">
    <location>
        <begin position="71"/>
        <end position="91"/>
    </location>
</feature>
<feature type="transmembrane region" description="Helical" evidence="1">
    <location>
        <begin position="124"/>
        <end position="144"/>
    </location>
</feature>
<feature type="transmembrane region" description="Helical" evidence="1">
    <location>
        <begin position="155"/>
        <end position="175"/>
    </location>
</feature>
<feature type="transmembrane region" description="Helical" evidence="1">
    <location>
        <begin position="202"/>
        <end position="222"/>
    </location>
</feature>
<feature type="transmembrane region" description="Helical" evidence="1">
    <location>
        <begin position="234"/>
        <end position="254"/>
    </location>
</feature>
<feature type="transmembrane region" description="Helical" evidence="1">
    <location>
        <begin position="262"/>
        <end position="282"/>
    </location>
</feature>
<keyword id="KW-0150">Chloroplast</keyword>
<keyword id="KW-0472">Membrane</keyword>
<keyword id="KW-0934">Plastid</keyword>
<keyword id="KW-0812">Transmembrane</keyword>
<keyword id="KW-1133">Transmembrane helix</keyword>
<accession>O78493</accession>
<sequence length="290" mass="33162">MLFNLTVLVMKTFKFHYKFILLFSNKFRFYLYYYMKTRSNSVLIPYTLNFKQVEAEMSLAEHLEEIRQRAFWSFSVLTTMIISCIIFVKNIVKTLQEPAAGIKFLQFAPGEYFFASIKVAAYSGILISSPFIVYQILLFVLPGMTKDERKTLLPIIIGSMILFLLGLIFGYYILVPASLNFFIKYGSDVVEPFWSFEQYFEFILVLLFGTALAFQLPVLQLVLGFLRIVSGKTMFSIWRYVILLSTVVGAVLTPSVDPLTQILLSSIILILYFGGASLVLVVEGSQKNNN</sequence>
<comment type="subcellular location">
    <subcellularLocation>
        <location evidence="2">Plastid</location>
        <location evidence="2">Chloroplast membrane</location>
        <topology evidence="2">Multi-pass membrane protein</topology>
    </subcellularLocation>
</comment>
<comment type="similarity">
    <text evidence="2">Belongs to the TatC family.</text>
</comment>
<protein>
    <recommendedName>
        <fullName>Uncharacterized tatC-like protein ycf43</fullName>
    </recommendedName>
</protein>
<evidence type="ECO:0000255" key="1"/>
<evidence type="ECO:0000305" key="2"/>
<organism>
    <name type="scientific">Guillardia theta</name>
    <name type="common">Cryptophyte</name>
    <name type="synonym">Cryptomonas phi</name>
    <dbReference type="NCBI Taxonomy" id="55529"/>
    <lineage>
        <taxon>Eukaryota</taxon>
        <taxon>Cryptophyceae</taxon>
        <taxon>Pyrenomonadales</taxon>
        <taxon>Geminigeraceae</taxon>
        <taxon>Guillardia</taxon>
    </lineage>
</organism>
<gene>
    <name type="primary">ycf43</name>
</gene>